<comment type="function">
    <text evidence="1">Catalyzes the attachment of glutamate to tRNA(Glu) in a two-step reaction: glutamate is first activated by ATP to form Glu-AMP and then transferred to the acceptor end of tRNA(Glu).</text>
</comment>
<comment type="catalytic activity">
    <reaction evidence="1">
        <text>tRNA(Glu) + L-glutamate + ATP = L-glutamyl-tRNA(Glu) + AMP + diphosphate</text>
        <dbReference type="Rhea" id="RHEA:23540"/>
        <dbReference type="Rhea" id="RHEA-COMP:9663"/>
        <dbReference type="Rhea" id="RHEA-COMP:9680"/>
        <dbReference type="ChEBI" id="CHEBI:29985"/>
        <dbReference type="ChEBI" id="CHEBI:30616"/>
        <dbReference type="ChEBI" id="CHEBI:33019"/>
        <dbReference type="ChEBI" id="CHEBI:78442"/>
        <dbReference type="ChEBI" id="CHEBI:78520"/>
        <dbReference type="ChEBI" id="CHEBI:456215"/>
        <dbReference type="EC" id="6.1.1.17"/>
    </reaction>
</comment>
<comment type="subcellular location">
    <subcellularLocation>
        <location evidence="1">Cytoplasm</location>
    </subcellularLocation>
</comment>
<comment type="similarity">
    <text evidence="1">Belongs to the class-I aminoacyl-tRNA synthetase family. Glutamate--tRNA ligase type 2 subfamily.</text>
</comment>
<reference key="1">
    <citation type="submission" date="2007-02" db="EMBL/GenBank/DDBJ databases">
        <title>Complete sequence of Pyrobaculum calidifontis JCM 11548.</title>
        <authorList>
            <consortium name="US DOE Joint Genome Institute"/>
            <person name="Copeland A."/>
            <person name="Lucas S."/>
            <person name="Lapidus A."/>
            <person name="Barry K."/>
            <person name="Glavina del Rio T."/>
            <person name="Dalin E."/>
            <person name="Tice H."/>
            <person name="Pitluck S."/>
            <person name="Chain P."/>
            <person name="Malfatti S."/>
            <person name="Shin M."/>
            <person name="Vergez L."/>
            <person name="Schmutz J."/>
            <person name="Larimer F."/>
            <person name="Land M."/>
            <person name="Hauser L."/>
            <person name="Kyrpides N."/>
            <person name="Mikhailova N."/>
            <person name="Cozen A.E."/>
            <person name="Fitz-Gibbon S.T."/>
            <person name="House C.H."/>
            <person name="Saltikov C."/>
            <person name="Lowe T.M."/>
            <person name="Richardson P."/>
        </authorList>
    </citation>
    <scope>NUCLEOTIDE SEQUENCE [LARGE SCALE GENOMIC DNA]</scope>
    <source>
        <strain>DSM 21063 / JCM 11548 / VA1</strain>
    </source>
</reference>
<evidence type="ECO:0000255" key="1">
    <source>
        <dbReference type="HAMAP-Rule" id="MF_02076"/>
    </source>
</evidence>
<keyword id="KW-0030">Aminoacyl-tRNA synthetase</keyword>
<keyword id="KW-0067">ATP-binding</keyword>
<keyword id="KW-0963">Cytoplasm</keyword>
<keyword id="KW-0436">Ligase</keyword>
<keyword id="KW-0547">Nucleotide-binding</keyword>
<keyword id="KW-0648">Protein biosynthesis</keyword>
<proteinExistence type="inferred from homology"/>
<name>SYE_PYRCJ</name>
<dbReference type="EC" id="6.1.1.17" evidence="1"/>
<dbReference type="EMBL" id="CP000561">
    <property type="protein sequence ID" value="ABO08562.1"/>
    <property type="molecule type" value="Genomic_DNA"/>
</dbReference>
<dbReference type="RefSeq" id="WP_011849820.1">
    <property type="nucleotide sequence ID" value="NC_009073.1"/>
</dbReference>
<dbReference type="SMR" id="A3MV95"/>
<dbReference type="STRING" id="410359.Pcal_1137"/>
<dbReference type="GeneID" id="4908841"/>
<dbReference type="KEGG" id="pcl:Pcal_1137"/>
<dbReference type="eggNOG" id="arCOG04302">
    <property type="taxonomic scope" value="Archaea"/>
</dbReference>
<dbReference type="HOGENOM" id="CLU_001882_1_3_2"/>
<dbReference type="OrthoDB" id="10470at2157"/>
<dbReference type="Proteomes" id="UP000001431">
    <property type="component" value="Chromosome"/>
</dbReference>
<dbReference type="GO" id="GO:0005829">
    <property type="term" value="C:cytosol"/>
    <property type="evidence" value="ECO:0007669"/>
    <property type="project" value="TreeGrafter"/>
</dbReference>
<dbReference type="GO" id="GO:0005524">
    <property type="term" value="F:ATP binding"/>
    <property type="evidence" value="ECO:0007669"/>
    <property type="project" value="UniProtKB-UniRule"/>
</dbReference>
<dbReference type="GO" id="GO:0004818">
    <property type="term" value="F:glutamate-tRNA ligase activity"/>
    <property type="evidence" value="ECO:0007669"/>
    <property type="project" value="UniProtKB-UniRule"/>
</dbReference>
<dbReference type="GO" id="GO:0043604">
    <property type="term" value="P:amide biosynthetic process"/>
    <property type="evidence" value="ECO:0007669"/>
    <property type="project" value="TreeGrafter"/>
</dbReference>
<dbReference type="GO" id="GO:0006424">
    <property type="term" value="P:glutamyl-tRNA aminoacylation"/>
    <property type="evidence" value="ECO:0007669"/>
    <property type="project" value="UniProtKB-UniRule"/>
</dbReference>
<dbReference type="FunFam" id="3.40.50.620:FF:000222">
    <property type="entry name" value="Glutamate--tRNA ligase"/>
    <property type="match status" value="1"/>
</dbReference>
<dbReference type="Gene3D" id="3.40.50.620">
    <property type="entry name" value="HUPs"/>
    <property type="match status" value="1"/>
</dbReference>
<dbReference type="Gene3D" id="2.40.240.10">
    <property type="entry name" value="Ribosomal Protein L25, Chain P"/>
    <property type="match status" value="1"/>
</dbReference>
<dbReference type="HAMAP" id="MF_02076">
    <property type="entry name" value="Glu_tRNA_synth_type2"/>
    <property type="match status" value="1"/>
</dbReference>
<dbReference type="InterPro" id="IPR050132">
    <property type="entry name" value="Gln/Glu-tRNA_Ligase"/>
</dbReference>
<dbReference type="InterPro" id="IPR004526">
    <property type="entry name" value="Glu-tRNA-synth_arc/euk"/>
</dbReference>
<dbReference type="InterPro" id="IPR000924">
    <property type="entry name" value="Glu/Gln-tRNA-synth"/>
</dbReference>
<dbReference type="InterPro" id="IPR020058">
    <property type="entry name" value="Glu/Gln-tRNA-synth_Ib_cat-dom"/>
</dbReference>
<dbReference type="InterPro" id="IPR020059">
    <property type="entry name" value="Glu/Gln-tRNA-synth_Ib_codon-bd"/>
</dbReference>
<dbReference type="InterPro" id="IPR020056">
    <property type="entry name" value="Rbsml_bL25/Gln-tRNA_synth_N"/>
</dbReference>
<dbReference type="InterPro" id="IPR011035">
    <property type="entry name" value="Ribosomal_bL25/Gln-tRNA_synth"/>
</dbReference>
<dbReference type="InterPro" id="IPR014729">
    <property type="entry name" value="Rossmann-like_a/b/a_fold"/>
</dbReference>
<dbReference type="NCBIfam" id="TIGR00463">
    <property type="entry name" value="gltX_arch"/>
    <property type="match status" value="1"/>
</dbReference>
<dbReference type="NCBIfam" id="NF003169">
    <property type="entry name" value="PRK04156.1"/>
    <property type="match status" value="1"/>
</dbReference>
<dbReference type="PANTHER" id="PTHR43097:SF5">
    <property type="entry name" value="GLUTAMATE--TRNA LIGASE"/>
    <property type="match status" value="1"/>
</dbReference>
<dbReference type="PANTHER" id="PTHR43097">
    <property type="entry name" value="GLUTAMINE-TRNA LIGASE"/>
    <property type="match status" value="1"/>
</dbReference>
<dbReference type="Pfam" id="PF00749">
    <property type="entry name" value="tRNA-synt_1c"/>
    <property type="match status" value="1"/>
</dbReference>
<dbReference type="Pfam" id="PF03950">
    <property type="entry name" value="tRNA-synt_1c_C"/>
    <property type="match status" value="1"/>
</dbReference>
<dbReference type="PRINTS" id="PR00987">
    <property type="entry name" value="TRNASYNTHGLU"/>
</dbReference>
<dbReference type="SUPFAM" id="SSF52374">
    <property type="entry name" value="Nucleotidylyl transferase"/>
    <property type="match status" value="1"/>
</dbReference>
<dbReference type="SUPFAM" id="SSF50715">
    <property type="entry name" value="Ribosomal protein L25-like"/>
    <property type="match status" value="1"/>
</dbReference>
<gene>
    <name evidence="1" type="primary">gltX</name>
    <name type="ordered locus">Pcal_1137</name>
</gene>
<accession>A3MV95</accession>
<organism>
    <name type="scientific">Pyrobaculum calidifontis (strain DSM 21063 / JCM 11548 / VA1)</name>
    <dbReference type="NCBI Taxonomy" id="410359"/>
    <lineage>
        <taxon>Archaea</taxon>
        <taxon>Thermoproteota</taxon>
        <taxon>Thermoprotei</taxon>
        <taxon>Thermoproteales</taxon>
        <taxon>Thermoproteaceae</taxon>
        <taxon>Pyrobaculum</taxon>
    </lineage>
</organism>
<sequence>MNIEEVALKYALANAVKYGGKADVKAVMAKIMAEVPELRPRAREVKEVVEAVVARVNAMSLEEQRRLLEEKWPEALEEKRPEQKRPGIEALPDLPKVKGGVVVRFAPNPDFVLHLGSARPAILNYAYRLKYGGRFILRFEDTDPRTKRPLVTEEVNAYEAIREDLRWLGVSWDEEYIQSRRMEVYYDYAKRLLAMGAAYVDLCRPEEWRRLRNEGRACPHRSQSPEENLELWDKMLEGRFREGEAVVRIKTDLSHPDPSVRDWVAFRIIDTSKTPHPLVGDKYIVWPTYNFAVSIDDHLMGVTHVLRAQEHSVNTVKQSYVFKHFGWEQPVTIHFGRLKIEGATLSKSKLKALKVRYDDPTLPTLAGLRARGILPEAIWELILTVGIKPSDSTVALSNLFALNRKKIEPVANRYMYVADPVRLVFEADRELVAKVPYHPSFRERGERVYRLGPGRVEVFVQRQDVKEGAVVRLMELANVEIERVEGGVAYGRLHSLSLEEARKIGAPIIQWVVDPVEVRVVRPWAPGRKVEEVGLGEAVLRGVEVGAYAQFFRYGFVKKIGPDVFIYVHD</sequence>
<protein>
    <recommendedName>
        <fullName evidence="1">Glutamate--tRNA ligase</fullName>
        <ecNumber evidence="1">6.1.1.17</ecNumber>
    </recommendedName>
    <alternativeName>
        <fullName evidence="1">Glutamyl-tRNA synthetase</fullName>
        <shortName evidence="1">GluRS</shortName>
    </alternativeName>
</protein>
<feature type="chain" id="PRO_1000057200" description="Glutamate--tRNA ligase">
    <location>
        <begin position="1"/>
        <end position="570"/>
    </location>
</feature>
<feature type="short sequence motif" description="'HIGH' region" evidence="1">
    <location>
        <begin position="107"/>
        <end position="117"/>
    </location>
</feature>